<dbReference type="EMBL" id="CP000511">
    <property type="protein sequence ID" value="ABM13882.1"/>
    <property type="molecule type" value="Genomic_DNA"/>
</dbReference>
<dbReference type="RefSeq" id="WP_011780287.1">
    <property type="nucleotide sequence ID" value="NZ_JACKSD010000192.1"/>
</dbReference>
<dbReference type="SMR" id="A1T9N2"/>
<dbReference type="STRING" id="350058.Mvan_3080"/>
<dbReference type="KEGG" id="mva:Mvan_3080"/>
<dbReference type="eggNOG" id="COG0378">
    <property type="taxonomic scope" value="Bacteria"/>
</dbReference>
<dbReference type="HOGENOM" id="CLU_072144_1_0_11"/>
<dbReference type="Proteomes" id="UP000009159">
    <property type="component" value="Chromosome"/>
</dbReference>
<dbReference type="GO" id="GO:0005737">
    <property type="term" value="C:cytoplasm"/>
    <property type="evidence" value="ECO:0007669"/>
    <property type="project" value="UniProtKB-SubCell"/>
</dbReference>
<dbReference type="GO" id="GO:0005525">
    <property type="term" value="F:GTP binding"/>
    <property type="evidence" value="ECO:0007669"/>
    <property type="project" value="UniProtKB-KW"/>
</dbReference>
<dbReference type="GO" id="GO:0003924">
    <property type="term" value="F:GTPase activity"/>
    <property type="evidence" value="ECO:0007669"/>
    <property type="project" value="InterPro"/>
</dbReference>
<dbReference type="GO" id="GO:0016151">
    <property type="term" value="F:nickel cation binding"/>
    <property type="evidence" value="ECO:0007669"/>
    <property type="project" value="UniProtKB-UniRule"/>
</dbReference>
<dbReference type="GO" id="GO:0043419">
    <property type="term" value="P:urea catabolic process"/>
    <property type="evidence" value="ECO:0007669"/>
    <property type="project" value="InterPro"/>
</dbReference>
<dbReference type="CDD" id="cd05540">
    <property type="entry name" value="UreG"/>
    <property type="match status" value="1"/>
</dbReference>
<dbReference type="FunFam" id="3.40.50.300:FF:000208">
    <property type="entry name" value="Urease accessory protein UreG"/>
    <property type="match status" value="1"/>
</dbReference>
<dbReference type="Gene3D" id="3.40.50.300">
    <property type="entry name" value="P-loop containing nucleotide triphosphate hydrolases"/>
    <property type="match status" value="1"/>
</dbReference>
<dbReference type="HAMAP" id="MF_01389">
    <property type="entry name" value="UreG"/>
    <property type="match status" value="1"/>
</dbReference>
<dbReference type="InterPro" id="IPR003495">
    <property type="entry name" value="CobW/HypB/UreG_nucleotide-bd"/>
</dbReference>
<dbReference type="InterPro" id="IPR027417">
    <property type="entry name" value="P-loop_NTPase"/>
</dbReference>
<dbReference type="InterPro" id="IPR004400">
    <property type="entry name" value="UreG"/>
</dbReference>
<dbReference type="NCBIfam" id="TIGR00101">
    <property type="entry name" value="ureG"/>
    <property type="match status" value="1"/>
</dbReference>
<dbReference type="PANTHER" id="PTHR31715">
    <property type="entry name" value="UREASE ACCESSORY PROTEIN G"/>
    <property type="match status" value="1"/>
</dbReference>
<dbReference type="PANTHER" id="PTHR31715:SF0">
    <property type="entry name" value="UREASE ACCESSORY PROTEIN G"/>
    <property type="match status" value="1"/>
</dbReference>
<dbReference type="Pfam" id="PF02492">
    <property type="entry name" value="cobW"/>
    <property type="match status" value="1"/>
</dbReference>
<dbReference type="PIRSF" id="PIRSF005624">
    <property type="entry name" value="Ni-bind_GTPase"/>
    <property type="match status" value="1"/>
</dbReference>
<dbReference type="SUPFAM" id="SSF52540">
    <property type="entry name" value="P-loop containing nucleoside triphosphate hydrolases"/>
    <property type="match status" value="1"/>
</dbReference>
<comment type="function">
    <text evidence="1">Facilitates the functional incorporation of the urease nickel metallocenter. This process requires GTP hydrolysis, probably effectuated by UreG.</text>
</comment>
<comment type="subunit">
    <text evidence="1">Homodimer. UreD, UreF and UreG form a complex that acts as a GTP-hydrolysis-dependent molecular chaperone, activating the urease apoprotein by helping to assemble the nickel containing metallocenter of UreC. The UreE protein probably delivers the nickel.</text>
</comment>
<comment type="subcellular location">
    <subcellularLocation>
        <location evidence="1">Cytoplasm</location>
    </subcellularLocation>
</comment>
<comment type="similarity">
    <text evidence="1">Belongs to the SIMIBI class G3E GTPase family. UreG subfamily.</text>
</comment>
<gene>
    <name evidence="1" type="primary">ureG</name>
    <name type="ordered locus">Mvan_3080</name>
</gene>
<keyword id="KW-0143">Chaperone</keyword>
<keyword id="KW-0963">Cytoplasm</keyword>
<keyword id="KW-0342">GTP-binding</keyword>
<keyword id="KW-0996">Nickel insertion</keyword>
<keyword id="KW-0547">Nucleotide-binding</keyword>
<accession>A1T9N2</accession>
<protein>
    <recommendedName>
        <fullName evidence="1">Urease accessory protein UreG</fullName>
    </recommendedName>
</protein>
<evidence type="ECO:0000255" key="1">
    <source>
        <dbReference type="HAMAP-Rule" id="MF_01389"/>
    </source>
</evidence>
<evidence type="ECO:0000256" key="2">
    <source>
        <dbReference type="SAM" id="MobiDB-lite"/>
    </source>
</evidence>
<organism>
    <name type="scientific">Mycolicibacterium vanbaalenii (strain DSM 7251 / JCM 13017 / BCRC 16820 / KCTC 9966 / NRRL B-24157 / PYR-1)</name>
    <name type="common">Mycobacterium vanbaalenii</name>
    <dbReference type="NCBI Taxonomy" id="350058"/>
    <lineage>
        <taxon>Bacteria</taxon>
        <taxon>Bacillati</taxon>
        <taxon>Actinomycetota</taxon>
        <taxon>Actinomycetes</taxon>
        <taxon>Mycobacteriales</taxon>
        <taxon>Mycobacteriaceae</taxon>
        <taxon>Mycolicibacterium</taxon>
    </lineage>
</organism>
<name>UREG_MYCVP</name>
<reference key="1">
    <citation type="submission" date="2006-12" db="EMBL/GenBank/DDBJ databases">
        <title>Complete sequence of Mycobacterium vanbaalenii PYR-1.</title>
        <authorList>
            <consortium name="US DOE Joint Genome Institute"/>
            <person name="Copeland A."/>
            <person name="Lucas S."/>
            <person name="Lapidus A."/>
            <person name="Barry K."/>
            <person name="Detter J.C."/>
            <person name="Glavina del Rio T."/>
            <person name="Hammon N."/>
            <person name="Israni S."/>
            <person name="Dalin E."/>
            <person name="Tice H."/>
            <person name="Pitluck S."/>
            <person name="Singan V."/>
            <person name="Schmutz J."/>
            <person name="Larimer F."/>
            <person name="Land M."/>
            <person name="Hauser L."/>
            <person name="Kyrpides N."/>
            <person name="Anderson I.J."/>
            <person name="Miller C."/>
            <person name="Richardson P."/>
        </authorList>
    </citation>
    <scope>NUCLEOTIDE SEQUENCE [LARGE SCALE GENOMIC DNA]</scope>
    <source>
        <strain>DSM 7251 / JCM 13017 / BCRC 16820 / KCTC 9966 / NRRL B-24157 / PYR-1</strain>
    </source>
</reference>
<sequence length="226" mass="24053">MPPHFLDGQPHGHTDRPRRVRQPGEPLRIGVGGPVGSGKTALVAALCRQLRDELSLAVLTNDIYTTEDADFLRRHAVLPDDRIAAVQTGGCPHTAIRDDITANLDAIDDLIAGHDDLDLILVESGGDNLTATFSSGLVDVQIFVIDVAGGDKVPRKGGPGVTFSDLLVVNKTDLAPLVGADLEVMRRDAAAVRGDRPFELISLAVDPAATPVLSWVREQLRVAQAV</sequence>
<feature type="chain" id="PRO_1000145195" description="Urease accessory protein UreG">
    <location>
        <begin position="1"/>
        <end position="226"/>
    </location>
</feature>
<feature type="region of interest" description="Disordered" evidence="2">
    <location>
        <begin position="1"/>
        <end position="26"/>
    </location>
</feature>
<feature type="binding site" evidence="1">
    <location>
        <begin position="33"/>
        <end position="40"/>
    </location>
    <ligand>
        <name>GTP</name>
        <dbReference type="ChEBI" id="CHEBI:37565"/>
    </ligand>
</feature>
<proteinExistence type="inferred from homology"/>